<name>PSBE_GUITH</name>
<geneLocation type="chloroplast"/>
<accession>O78466</accession>
<keyword id="KW-0150">Chloroplast</keyword>
<keyword id="KW-0249">Electron transport</keyword>
<keyword id="KW-0349">Heme</keyword>
<keyword id="KW-0408">Iron</keyword>
<keyword id="KW-0472">Membrane</keyword>
<keyword id="KW-0479">Metal-binding</keyword>
<keyword id="KW-0602">Photosynthesis</keyword>
<keyword id="KW-0604">Photosystem II</keyword>
<keyword id="KW-0934">Plastid</keyword>
<keyword id="KW-0793">Thylakoid</keyword>
<keyword id="KW-0812">Transmembrane</keyword>
<keyword id="KW-1133">Transmembrane helix</keyword>
<keyword id="KW-0813">Transport</keyword>
<comment type="function">
    <text evidence="1">This b-type cytochrome is tightly associated with the reaction center of photosystem II (PSII). PSII is a light-driven water:plastoquinone oxidoreductase that uses light energy to abstract electrons from H(2)O, generating O(2) and a proton gradient subsequently used for ATP formation. It consists of a core antenna complex that captures photons, and an electron transfer chain that converts photonic excitation into a charge separation.</text>
</comment>
<comment type="cofactor">
    <cofactor evidence="1">
        <name>heme b</name>
        <dbReference type="ChEBI" id="CHEBI:60344"/>
    </cofactor>
    <text evidence="1">With its partner (PsbF) binds heme. PSII binds additional chlorophylls, carotenoids and specific lipids.</text>
</comment>
<comment type="subunit">
    <text evidence="1">Heterodimer of an alpha subunit and a beta subunit. PSII is composed of 1 copy each of membrane proteins PsbA, PsbB, PsbC, PsbD, PsbE, PsbF, PsbH, PsbI, PsbJ, PsbK, PsbL, PsbM, PsbT, PsbX, PsbY, PsbZ, Psb30/Ycf12, at least 3 peripheral proteins of the oxygen-evolving complex and a large number of cofactors. It forms dimeric complexes.</text>
</comment>
<comment type="subcellular location">
    <subcellularLocation>
        <location evidence="1">Plastid</location>
        <location evidence="1">Chloroplast thylakoid membrane</location>
        <topology evidence="1">Single-pass membrane protein</topology>
    </subcellularLocation>
</comment>
<comment type="similarity">
    <text evidence="1">Belongs to the PsbE/PsbF family.</text>
</comment>
<gene>
    <name evidence="1" type="primary">psbE</name>
</gene>
<evidence type="ECO:0000255" key="1">
    <source>
        <dbReference type="HAMAP-Rule" id="MF_00642"/>
    </source>
</evidence>
<proteinExistence type="inferred from homology"/>
<protein>
    <recommendedName>
        <fullName evidence="1">Cytochrome b559 subunit alpha</fullName>
    </recommendedName>
    <alternativeName>
        <fullName evidence="1">PSII reaction center subunit V</fullName>
    </alternativeName>
</protein>
<sequence length="84" mass="9496">MSGGSTGERPFSDIITSIRYWIIHSITIPALFVAGWLFVSTGLAYDIFGTPRPNEYFTQERQQVPLVNDRFSAKQELEDLTKGL</sequence>
<feature type="chain" id="PRO_0000200312" description="Cytochrome b559 subunit alpha">
    <location>
        <begin position="1"/>
        <end position="84"/>
    </location>
</feature>
<feature type="transmembrane region" description="Helical" evidence="1">
    <location>
        <begin position="22"/>
        <end position="36"/>
    </location>
</feature>
<feature type="binding site" description="axial binding residue" evidence="1">
    <location>
        <position position="24"/>
    </location>
    <ligand>
        <name>heme</name>
        <dbReference type="ChEBI" id="CHEBI:30413"/>
        <note>ligand shared with beta subunit</note>
    </ligand>
    <ligandPart>
        <name>Fe</name>
        <dbReference type="ChEBI" id="CHEBI:18248"/>
    </ligandPart>
</feature>
<reference key="1">
    <citation type="journal article" date="1999" name="J. Mol. Evol.">
        <title>The plastid genome of the cryptophyte alga, Guillardia theta: complete sequence and conserved synteny groups confirm its common ancestry with red algae.</title>
        <authorList>
            <person name="Douglas S.E."/>
            <person name="Penny S.L."/>
        </authorList>
    </citation>
    <scope>NUCLEOTIDE SEQUENCE [LARGE SCALE GENOMIC DNA]</scope>
</reference>
<dbReference type="EMBL" id="AF041468">
    <property type="protein sequence ID" value="AAC35657.1"/>
    <property type="molecule type" value="Genomic_DNA"/>
</dbReference>
<dbReference type="RefSeq" id="NP_050723.1">
    <property type="nucleotide sequence ID" value="NC_000926.1"/>
</dbReference>
<dbReference type="SMR" id="O78466"/>
<dbReference type="GeneID" id="857026"/>
<dbReference type="HOGENOM" id="CLU_194095_0_0_1"/>
<dbReference type="OMA" id="VRYWVIH"/>
<dbReference type="GO" id="GO:0009535">
    <property type="term" value="C:chloroplast thylakoid membrane"/>
    <property type="evidence" value="ECO:0007669"/>
    <property type="project" value="UniProtKB-SubCell"/>
</dbReference>
<dbReference type="GO" id="GO:0009539">
    <property type="term" value="C:photosystem II reaction center"/>
    <property type="evidence" value="ECO:0007669"/>
    <property type="project" value="InterPro"/>
</dbReference>
<dbReference type="GO" id="GO:0009055">
    <property type="term" value="F:electron transfer activity"/>
    <property type="evidence" value="ECO:0007669"/>
    <property type="project" value="UniProtKB-UniRule"/>
</dbReference>
<dbReference type="GO" id="GO:0020037">
    <property type="term" value="F:heme binding"/>
    <property type="evidence" value="ECO:0007669"/>
    <property type="project" value="InterPro"/>
</dbReference>
<dbReference type="GO" id="GO:0005506">
    <property type="term" value="F:iron ion binding"/>
    <property type="evidence" value="ECO:0007669"/>
    <property type="project" value="UniProtKB-UniRule"/>
</dbReference>
<dbReference type="GO" id="GO:0009767">
    <property type="term" value="P:photosynthetic electron transport chain"/>
    <property type="evidence" value="ECO:0007669"/>
    <property type="project" value="InterPro"/>
</dbReference>
<dbReference type="Gene3D" id="1.20.5.860">
    <property type="entry name" value="Photosystem II cytochrome b559, alpha subunit"/>
    <property type="match status" value="1"/>
</dbReference>
<dbReference type="HAMAP" id="MF_00642">
    <property type="entry name" value="PSII_PsbE"/>
    <property type="match status" value="1"/>
</dbReference>
<dbReference type="InterPro" id="IPR006217">
    <property type="entry name" value="PSII_cyt_b559_asu"/>
</dbReference>
<dbReference type="InterPro" id="IPR037025">
    <property type="entry name" value="PSII_cyt_b559_asu_sf"/>
</dbReference>
<dbReference type="InterPro" id="IPR006216">
    <property type="entry name" value="PSII_cyt_b559_CS"/>
</dbReference>
<dbReference type="InterPro" id="IPR013081">
    <property type="entry name" value="PSII_cyt_b559_N"/>
</dbReference>
<dbReference type="InterPro" id="IPR013082">
    <property type="entry name" value="PSII_cytb559_asu_lum"/>
</dbReference>
<dbReference type="NCBIfam" id="TIGR01332">
    <property type="entry name" value="cyt_b559_alpha"/>
    <property type="match status" value="1"/>
</dbReference>
<dbReference type="PANTHER" id="PTHR33391">
    <property type="entry name" value="CYTOCHROME B559 SUBUNIT BETA-RELATED"/>
    <property type="match status" value="1"/>
</dbReference>
<dbReference type="PANTHER" id="PTHR33391:SF9">
    <property type="entry name" value="CYTOCHROME B559 SUBUNIT BETA-RELATED"/>
    <property type="match status" value="1"/>
</dbReference>
<dbReference type="Pfam" id="PF00283">
    <property type="entry name" value="Cytochrom_B559"/>
    <property type="match status" value="1"/>
</dbReference>
<dbReference type="Pfam" id="PF00284">
    <property type="entry name" value="Cytochrom_B559a"/>
    <property type="match status" value="1"/>
</dbReference>
<dbReference type="PIRSF" id="PIRSF000036">
    <property type="entry name" value="PsbE"/>
    <property type="match status" value="1"/>
</dbReference>
<dbReference type="SUPFAM" id="SSF161045">
    <property type="entry name" value="Cytochrome b559 subunits"/>
    <property type="match status" value="1"/>
</dbReference>
<dbReference type="PROSITE" id="PS00537">
    <property type="entry name" value="CYTOCHROME_B559"/>
    <property type="match status" value="1"/>
</dbReference>
<organism>
    <name type="scientific">Guillardia theta</name>
    <name type="common">Cryptophyte</name>
    <name type="synonym">Cryptomonas phi</name>
    <dbReference type="NCBI Taxonomy" id="55529"/>
    <lineage>
        <taxon>Eukaryota</taxon>
        <taxon>Cryptophyceae</taxon>
        <taxon>Pyrenomonadales</taxon>
        <taxon>Geminigeraceae</taxon>
        <taxon>Guillardia</taxon>
    </lineage>
</organism>